<gene>
    <name evidence="5" type="primary">nikC</name>
    <name type="synonym">opp-2C</name>
    <name type="synonym">oppC2</name>
    <name type="ordered locus">SAOUHSC_01379</name>
</gene>
<feature type="chain" id="PRO_0000272186" description="Nickel import system permease protein NikC">
    <location>
        <begin position="1"/>
        <end position="276"/>
    </location>
</feature>
<feature type="transmembrane region" description="Helical" evidence="1">
    <location>
        <begin position="10"/>
        <end position="30"/>
    </location>
</feature>
<feature type="transmembrane region" description="Helical" evidence="1">
    <location>
        <begin position="73"/>
        <end position="93"/>
    </location>
</feature>
<feature type="transmembrane region" description="Helical" evidence="1">
    <location>
        <begin position="108"/>
        <end position="128"/>
    </location>
</feature>
<feature type="transmembrane region" description="Helical" evidence="1">
    <location>
        <begin position="186"/>
        <end position="206"/>
    </location>
</feature>
<feature type="transmembrane region" description="Helical" evidence="1">
    <location>
        <begin position="238"/>
        <end position="258"/>
    </location>
</feature>
<feature type="domain" description="ABC transmembrane type-1" evidence="2">
    <location>
        <begin position="69"/>
        <end position="258"/>
    </location>
</feature>
<dbReference type="EMBL" id="AF076684">
    <property type="protein sequence ID" value="AAC69844.1"/>
    <property type="molecule type" value="Genomic_DNA"/>
</dbReference>
<dbReference type="EMBL" id="AY205146">
    <property type="protein sequence ID" value="AAO47756.1"/>
    <property type="molecule type" value="Genomic_DNA"/>
</dbReference>
<dbReference type="EMBL" id="CP000253">
    <property type="protein sequence ID" value="ABD30474.1"/>
    <property type="molecule type" value="Genomic_DNA"/>
</dbReference>
<dbReference type="RefSeq" id="WP_000548932.1">
    <property type="nucleotide sequence ID" value="NZ_LS483365.1"/>
</dbReference>
<dbReference type="RefSeq" id="YP_499906.1">
    <property type="nucleotide sequence ID" value="NC_007795.1"/>
</dbReference>
<dbReference type="SMR" id="Q2FYQ6"/>
<dbReference type="STRING" id="93061.SAOUHSC_01379"/>
<dbReference type="PaxDb" id="1280-SAXN108_1396"/>
<dbReference type="GeneID" id="3920788"/>
<dbReference type="KEGG" id="sao:SAOUHSC_01379"/>
<dbReference type="PATRIC" id="fig|93061.5.peg.1263"/>
<dbReference type="eggNOG" id="COG1173">
    <property type="taxonomic scope" value="Bacteria"/>
</dbReference>
<dbReference type="HOGENOM" id="CLU_028518_5_3_9"/>
<dbReference type="OrthoDB" id="9797472at2"/>
<dbReference type="PRO" id="PR:Q2FYQ6"/>
<dbReference type="Proteomes" id="UP000008816">
    <property type="component" value="Chromosome"/>
</dbReference>
<dbReference type="GO" id="GO:0005886">
    <property type="term" value="C:plasma membrane"/>
    <property type="evidence" value="ECO:0000318"/>
    <property type="project" value="GO_Central"/>
</dbReference>
<dbReference type="GO" id="GO:0022857">
    <property type="term" value="F:transmembrane transporter activity"/>
    <property type="evidence" value="ECO:0000318"/>
    <property type="project" value="GO_Central"/>
</dbReference>
<dbReference type="GO" id="GO:0015675">
    <property type="term" value="P:nickel cation transport"/>
    <property type="evidence" value="ECO:0007669"/>
    <property type="project" value="UniProtKB-KW"/>
</dbReference>
<dbReference type="CDD" id="cd06261">
    <property type="entry name" value="TM_PBP2"/>
    <property type="match status" value="1"/>
</dbReference>
<dbReference type="Gene3D" id="1.10.3720.10">
    <property type="entry name" value="MetI-like"/>
    <property type="match status" value="1"/>
</dbReference>
<dbReference type="InterPro" id="IPR053385">
    <property type="entry name" value="ABC_transport_permease"/>
</dbReference>
<dbReference type="InterPro" id="IPR050366">
    <property type="entry name" value="BP-dependent_transpt_permease"/>
</dbReference>
<dbReference type="InterPro" id="IPR000515">
    <property type="entry name" value="MetI-like"/>
</dbReference>
<dbReference type="InterPro" id="IPR035906">
    <property type="entry name" value="MetI-like_sf"/>
</dbReference>
<dbReference type="NCBIfam" id="NF045474">
    <property type="entry name" value="Opp2C"/>
    <property type="match status" value="1"/>
</dbReference>
<dbReference type="PANTHER" id="PTHR43386:SF1">
    <property type="entry name" value="D,D-DIPEPTIDE TRANSPORT SYSTEM PERMEASE PROTEIN DDPC-RELATED"/>
    <property type="match status" value="1"/>
</dbReference>
<dbReference type="PANTHER" id="PTHR43386">
    <property type="entry name" value="OLIGOPEPTIDE TRANSPORT SYSTEM PERMEASE PROTEIN APPC"/>
    <property type="match status" value="1"/>
</dbReference>
<dbReference type="Pfam" id="PF00528">
    <property type="entry name" value="BPD_transp_1"/>
    <property type="match status" value="1"/>
</dbReference>
<dbReference type="SUPFAM" id="SSF161098">
    <property type="entry name" value="MetI-like"/>
    <property type="match status" value="1"/>
</dbReference>
<dbReference type="PROSITE" id="PS50928">
    <property type="entry name" value="ABC_TM1"/>
    <property type="match status" value="1"/>
</dbReference>
<accession>Q2FYQ6</accession>
<accession>Q84AN6</accession>
<accession>Q9ZGN5</accession>
<comment type="function">
    <text evidence="3">Part of the ABC transporter complex NikABCDE (Opp2) involved in nickel import. Probably responsible for the translocation of the substrate across the membrane. Required for full urease activity and plays a significant role in the virulence of S.aureus during urinary tract infection (UTI).</text>
</comment>
<comment type="subunit">
    <text evidence="3">The complex is composed of two ATP-binding proteins (NikD and NikE), two transmembrane proteins (NikB and NikC) and a solute-binding protein (NikA).</text>
</comment>
<comment type="subcellular location">
    <subcellularLocation>
        <location evidence="6">Cell membrane</location>
        <topology evidence="1">Multi-pass membrane protein</topology>
    </subcellularLocation>
</comment>
<comment type="induction">
    <text evidence="3">Transcription is stable during the exponential phase and increases only in standard conditions in late exponential phase.</text>
</comment>
<comment type="disruption phenotype">
    <text evidence="3 4">Deletion of the nikBCDE operon strongly reduces nickel transport and urease activity. Mutant shows decreased virulence in a mouse model of ascending UTI (PubMed:20662775). Insertion mutant shows attenuated growth in several infection models (PubMed:9791183).</text>
</comment>
<comment type="similarity">
    <text evidence="6">Belongs to the binding-protein-dependent transport system permease family. OppBC subfamily.</text>
</comment>
<protein>
    <recommendedName>
        <fullName evidence="6">Nickel import system permease protein NikC</fullName>
    </recommendedName>
</protein>
<name>NIKC_STAA8</name>
<keyword id="KW-1003">Cell membrane</keyword>
<keyword id="KW-0406">Ion transport</keyword>
<keyword id="KW-0472">Membrane</keyword>
<keyword id="KW-0533">Nickel</keyword>
<keyword id="KW-0921">Nickel transport</keyword>
<keyword id="KW-1185">Reference proteome</keyword>
<keyword id="KW-0812">Transmembrane</keyword>
<keyword id="KW-1133">Transmembrane helix</keyword>
<keyword id="KW-0813">Transport</keyword>
<sequence length="276" mass="31255">MHKIFSKNNLIFFVFVAFIFVVIVLQFFVSSENATKVNLSQTFEPISWLHLLGTDDYGRDLFTRIIIGARSTLFVTVLTLIAIVVIGVTLGLFAGYKKGWIERLVLRFIDVGLSIPEFIIMIALASFFQPSLWNLVISITLIKWMNYTRLTRSIVNSEMNKPYIKMAQLFHVPTRTILIRHLTPKIIPAIIVLMVVDFGKIILYISSLSFIGLGAQPPTPEWGAMLQQGRDFISSHPIMLIAPASVIAITILIFNLTGDALRDRLLKQRGEYDESH</sequence>
<proteinExistence type="evidence at protein level"/>
<evidence type="ECO:0000255" key="1"/>
<evidence type="ECO:0000255" key="2">
    <source>
        <dbReference type="PROSITE-ProRule" id="PRU00441"/>
    </source>
</evidence>
<evidence type="ECO:0000269" key="3">
    <source>
    </source>
</evidence>
<evidence type="ECO:0000269" key="4">
    <source>
    </source>
</evidence>
<evidence type="ECO:0000303" key="5">
    <source>
    </source>
</evidence>
<evidence type="ECO:0000305" key="6"/>
<organism>
    <name type="scientific">Staphylococcus aureus (strain NCTC 8325 / PS 47)</name>
    <dbReference type="NCBI Taxonomy" id="93061"/>
    <lineage>
        <taxon>Bacteria</taxon>
        <taxon>Bacillati</taxon>
        <taxon>Bacillota</taxon>
        <taxon>Bacilli</taxon>
        <taxon>Bacillales</taxon>
        <taxon>Staphylococcaceae</taxon>
        <taxon>Staphylococcus</taxon>
    </lineage>
</organism>
<reference key="1">
    <citation type="journal article" date="1998" name="Mol. Microbiol.">
        <title>Staphylococcus aureus genetic loci impacting growth and survival in multiple infection environments.</title>
        <authorList>
            <person name="Coulter S.N."/>
            <person name="Schwan W.R."/>
            <person name="Ng E.Y.W."/>
            <person name="Langhorne M.H."/>
            <person name="Ritchie H.D."/>
            <person name="Westbrock-Wadman S."/>
            <person name="Hufnagle W.O."/>
            <person name="Folger K.R."/>
            <person name="Bayer A.S."/>
            <person name="Stover C.K."/>
        </authorList>
    </citation>
    <scope>NUCLEOTIDE SEQUENCE [GENOMIC DNA]</scope>
    <scope>DISRUPTION PHENOTYPE</scope>
</reference>
<reference key="2">
    <citation type="submission" date="2002-12" db="EMBL/GenBank/DDBJ databases">
        <title>Role of the oligopeptide permease (opp-2) operon in Staphylococcus aureus biofilm formation.</title>
        <authorList>
            <person name="Cramton S.E."/>
            <person name="Madimidou F."/>
            <person name="Goetz F."/>
        </authorList>
    </citation>
    <scope>NUCLEOTIDE SEQUENCE [GENOMIC DNA]</scope>
</reference>
<reference key="3">
    <citation type="book" date="2006" name="Gram positive pathogens, 2nd edition">
        <title>The Staphylococcus aureus NCTC 8325 genome.</title>
        <editorList>
            <person name="Fischetti V."/>
            <person name="Novick R."/>
            <person name="Ferretti J."/>
            <person name="Portnoy D."/>
            <person name="Rood J."/>
        </editorList>
        <authorList>
            <person name="Gillaspy A.F."/>
            <person name="Worrell V."/>
            <person name="Orvis J."/>
            <person name="Roe B.A."/>
            <person name="Dyer D.W."/>
            <person name="Iandolo J.J."/>
        </authorList>
    </citation>
    <scope>NUCLEOTIDE SEQUENCE [LARGE SCALE GENOMIC DNA]</scope>
    <source>
        <strain>NCTC 8325 / PS 47</strain>
    </source>
</reference>
<reference key="4">
    <citation type="journal article" date="2010" name="Mol. Microbiol.">
        <title>A nickel ABC-transporter of Staphylococcus aureus is involved in urinary tract infection.</title>
        <authorList>
            <person name="Hiron A."/>
            <person name="Posteraro B."/>
            <person name="Carriere M."/>
            <person name="Remy L."/>
            <person name="Delporte C."/>
            <person name="La Sorda M."/>
            <person name="Sanguinetti M."/>
            <person name="Juillard V."/>
            <person name="Borezee-Durant E."/>
        </authorList>
    </citation>
    <scope>FUNCTION</scope>
    <scope>SUBUNIT</scope>
    <scope>INDUCTION</scope>
    <scope>DISRUPTION PHENOTYPE</scope>
    <source>
        <strain>RN6390</strain>
    </source>
</reference>